<dbReference type="EMBL" id="AM180088">
    <property type="protein sequence ID" value="CAJ53047.1"/>
    <property type="molecule type" value="Genomic_DNA"/>
</dbReference>
<dbReference type="RefSeq" id="WP_011572157.1">
    <property type="nucleotide sequence ID" value="NC_008212.1"/>
</dbReference>
<dbReference type="SMR" id="Q18G54"/>
<dbReference type="STRING" id="362976.HQ_2943A"/>
<dbReference type="GeneID" id="4194662"/>
<dbReference type="KEGG" id="hwa:HQ_2943A"/>
<dbReference type="eggNOG" id="arCOG04239">
    <property type="taxonomic scope" value="Archaea"/>
</dbReference>
<dbReference type="HOGENOM" id="CLU_089738_1_1_2"/>
<dbReference type="Proteomes" id="UP000001975">
    <property type="component" value="Chromosome"/>
</dbReference>
<dbReference type="GO" id="GO:0015935">
    <property type="term" value="C:small ribosomal subunit"/>
    <property type="evidence" value="ECO:0007669"/>
    <property type="project" value="InterPro"/>
</dbReference>
<dbReference type="GO" id="GO:0019843">
    <property type="term" value="F:rRNA binding"/>
    <property type="evidence" value="ECO:0007669"/>
    <property type="project" value="UniProtKB-UniRule"/>
</dbReference>
<dbReference type="GO" id="GO:0003735">
    <property type="term" value="F:structural constituent of ribosome"/>
    <property type="evidence" value="ECO:0007669"/>
    <property type="project" value="InterPro"/>
</dbReference>
<dbReference type="GO" id="GO:0042274">
    <property type="term" value="P:ribosomal small subunit biogenesis"/>
    <property type="evidence" value="ECO:0007669"/>
    <property type="project" value="TreeGrafter"/>
</dbReference>
<dbReference type="GO" id="GO:0006412">
    <property type="term" value="P:translation"/>
    <property type="evidence" value="ECO:0007669"/>
    <property type="project" value="UniProtKB-UniRule"/>
</dbReference>
<dbReference type="CDD" id="cd00165">
    <property type="entry name" value="S4"/>
    <property type="match status" value="1"/>
</dbReference>
<dbReference type="Gene3D" id="3.10.290.10">
    <property type="entry name" value="RNA-binding S4 domain"/>
    <property type="match status" value="1"/>
</dbReference>
<dbReference type="HAMAP" id="MF_01306_A">
    <property type="entry name" value="Ribosomal_uS4_A"/>
    <property type="match status" value="1"/>
</dbReference>
<dbReference type="InterPro" id="IPR022801">
    <property type="entry name" value="Ribosomal_uS4"/>
</dbReference>
<dbReference type="InterPro" id="IPR022802">
    <property type="entry name" value="Ribosomal_uS4_arc"/>
</dbReference>
<dbReference type="InterPro" id="IPR018079">
    <property type="entry name" value="Ribosomal_uS4_CS"/>
</dbReference>
<dbReference type="InterPro" id="IPR005710">
    <property type="entry name" value="Ribosomal_uS4_euk/arc"/>
</dbReference>
<dbReference type="InterPro" id="IPR001912">
    <property type="entry name" value="Ribosomal_uS4_N"/>
</dbReference>
<dbReference type="InterPro" id="IPR002942">
    <property type="entry name" value="S4_RNA-bd"/>
</dbReference>
<dbReference type="InterPro" id="IPR036986">
    <property type="entry name" value="S4_RNA-bd_sf"/>
</dbReference>
<dbReference type="NCBIfam" id="NF003139">
    <property type="entry name" value="PRK04051.1"/>
    <property type="match status" value="1"/>
</dbReference>
<dbReference type="NCBIfam" id="TIGR01018">
    <property type="entry name" value="uS4_arch"/>
    <property type="match status" value="1"/>
</dbReference>
<dbReference type="PANTHER" id="PTHR11831">
    <property type="entry name" value="30S 40S RIBOSOMAL PROTEIN"/>
    <property type="match status" value="1"/>
</dbReference>
<dbReference type="PANTHER" id="PTHR11831:SF5">
    <property type="entry name" value="40S RIBOSOMAL PROTEIN S9"/>
    <property type="match status" value="1"/>
</dbReference>
<dbReference type="Pfam" id="PF01479">
    <property type="entry name" value="S4"/>
    <property type="match status" value="1"/>
</dbReference>
<dbReference type="SMART" id="SM01390">
    <property type="entry name" value="Ribosomal_S4"/>
    <property type="match status" value="1"/>
</dbReference>
<dbReference type="SMART" id="SM00363">
    <property type="entry name" value="S4"/>
    <property type="match status" value="1"/>
</dbReference>
<dbReference type="SUPFAM" id="SSF55174">
    <property type="entry name" value="Alpha-L RNA-binding motif"/>
    <property type="match status" value="1"/>
</dbReference>
<dbReference type="PROSITE" id="PS00632">
    <property type="entry name" value="RIBOSOMAL_S4"/>
    <property type="match status" value="1"/>
</dbReference>
<dbReference type="PROSITE" id="PS50889">
    <property type="entry name" value="S4"/>
    <property type="match status" value="1"/>
</dbReference>
<proteinExistence type="inferred from homology"/>
<sequence>MSTGSNTKRYETPNHPYQGERIAQEGDLLGRYGLKNKEELWRTQSELREYRREARRLIGEAQGDVSVAEALGEEFLDRLRRYGILSADDDISKVLGLDVSDILERRLQTIVYRQGLASTPKQARQFIVHEHITVNGARVTRPSKMVEETEANAIAFDENSPLADSLHPARAEGQE</sequence>
<gene>
    <name evidence="1" type="primary">rps4</name>
    <name type="ordered locus">HQ_2943A</name>
</gene>
<reference key="1">
    <citation type="journal article" date="2006" name="BMC Genomics">
        <title>The genome of the square archaeon Haloquadratum walsbyi: life at the limits of water activity.</title>
        <authorList>
            <person name="Bolhuis H."/>
            <person name="Palm P."/>
            <person name="Wende A."/>
            <person name="Falb M."/>
            <person name="Rampp M."/>
            <person name="Rodriguez-Valera F."/>
            <person name="Pfeiffer F."/>
            <person name="Oesterhelt D."/>
        </authorList>
    </citation>
    <scope>NUCLEOTIDE SEQUENCE [LARGE SCALE GENOMIC DNA]</scope>
    <source>
        <strain>DSM 16790 / HBSQ001</strain>
    </source>
</reference>
<protein>
    <recommendedName>
        <fullName evidence="1">Small ribosomal subunit protein uS4</fullName>
    </recommendedName>
    <alternativeName>
        <fullName evidence="2">30S ribosomal protein S4</fullName>
    </alternativeName>
</protein>
<keyword id="KW-1185">Reference proteome</keyword>
<keyword id="KW-0687">Ribonucleoprotein</keyword>
<keyword id="KW-0689">Ribosomal protein</keyword>
<keyword id="KW-0694">RNA-binding</keyword>
<keyword id="KW-0699">rRNA-binding</keyword>
<accession>Q18G54</accession>
<evidence type="ECO:0000255" key="1">
    <source>
        <dbReference type="HAMAP-Rule" id="MF_01306"/>
    </source>
</evidence>
<evidence type="ECO:0000305" key="2"/>
<feature type="chain" id="PRO_0000293402" description="Small ribosomal subunit protein uS4">
    <location>
        <begin position="1"/>
        <end position="175"/>
    </location>
</feature>
<feature type="domain" description="S4 RNA-binding" evidence="1">
    <location>
        <begin position="105"/>
        <end position="169"/>
    </location>
</feature>
<name>RS4_HALWD</name>
<organism>
    <name type="scientific">Haloquadratum walsbyi (strain DSM 16790 / HBSQ001)</name>
    <dbReference type="NCBI Taxonomy" id="362976"/>
    <lineage>
        <taxon>Archaea</taxon>
        <taxon>Methanobacteriati</taxon>
        <taxon>Methanobacteriota</taxon>
        <taxon>Stenosarchaea group</taxon>
        <taxon>Halobacteria</taxon>
        <taxon>Halobacteriales</taxon>
        <taxon>Haloferacaceae</taxon>
        <taxon>Haloquadratum</taxon>
    </lineage>
</organism>
<comment type="function">
    <text evidence="1">One of the primary rRNA binding proteins, it binds directly to 16S rRNA where it nucleates assembly of the body of the 30S subunit.</text>
</comment>
<comment type="function">
    <text evidence="1">With S5 and S12 plays an important role in translational accuracy.</text>
</comment>
<comment type="subunit">
    <text evidence="1">Part of the 30S ribosomal subunit. Contacts protein S5. The interaction surface between S4 and S5 is involved in control of translational fidelity.</text>
</comment>
<comment type="similarity">
    <text evidence="1">Belongs to the universal ribosomal protein uS4 family.</text>
</comment>